<dbReference type="EC" id="1.5.1.5" evidence="1"/>
<dbReference type="EC" id="3.5.4.9" evidence="1"/>
<dbReference type="EMBL" id="AL591688">
    <property type="protein sequence ID" value="CAC41468.1"/>
    <property type="molecule type" value="Genomic_DNA"/>
</dbReference>
<dbReference type="RefSeq" id="NP_384187.1">
    <property type="nucleotide sequence ID" value="NC_003047.1"/>
</dbReference>
<dbReference type="RefSeq" id="WP_010968342.1">
    <property type="nucleotide sequence ID" value="NC_003047.1"/>
</dbReference>
<dbReference type="SMR" id="Q92T88"/>
<dbReference type="EnsemblBacteria" id="CAC41468">
    <property type="protein sequence ID" value="CAC41468"/>
    <property type="gene ID" value="SMc02604"/>
</dbReference>
<dbReference type="KEGG" id="sme:SMc02604"/>
<dbReference type="PATRIC" id="fig|266834.11.peg.1438"/>
<dbReference type="eggNOG" id="COG0190">
    <property type="taxonomic scope" value="Bacteria"/>
</dbReference>
<dbReference type="HOGENOM" id="CLU_034045_1_2_5"/>
<dbReference type="OrthoDB" id="9803580at2"/>
<dbReference type="UniPathway" id="UPA00193"/>
<dbReference type="Proteomes" id="UP000001976">
    <property type="component" value="Chromosome"/>
</dbReference>
<dbReference type="GO" id="GO:0005829">
    <property type="term" value="C:cytosol"/>
    <property type="evidence" value="ECO:0007669"/>
    <property type="project" value="TreeGrafter"/>
</dbReference>
<dbReference type="GO" id="GO:0004477">
    <property type="term" value="F:methenyltetrahydrofolate cyclohydrolase activity"/>
    <property type="evidence" value="ECO:0007669"/>
    <property type="project" value="UniProtKB-UniRule"/>
</dbReference>
<dbReference type="GO" id="GO:0004488">
    <property type="term" value="F:methylenetetrahydrofolate dehydrogenase (NADP+) activity"/>
    <property type="evidence" value="ECO:0007669"/>
    <property type="project" value="UniProtKB-UniRule"/>
</dbReference>
<dbReference type="GO" id="GO:0000105">
    <property type="term" value="P:L-histidine biosynthetic process"/>
    <property type="evidence" value="ECO:0007669"/>
    <property type="project" value="UniProtKB-KW"/>
</dbReference>
<dbReference type="GO" id="GO:0009086">
    <property type="term" value="P:methionine biosynthetic process"/>
    <property type="evidence" value="ECO:0007669"/>
    <property type="project" value="UniProtKB-KW"/>
</dbReference>
<dbReference type="GO" id="GO:0006164">
    <property type="term" value="P:purine nucleotide biosynthetic process"/>
    <property type="evidence" value="ECO:0007669"/>
    <property type="project" value="UniProtKB-KW"/>
</dbReference>
<dbReference type="GO" id="GO:0035999">
    <property type="term" value="P:tetrahydrofolate interconversion"/>
    <property type="evidence" value="ECO:0007669"/>
    <property type="project" value="UniProtKB-UniRule"/>
</dbReference>
<dbReference type="CDD" id="cd01080">
    <property type="entry name" value="NAD_bind_m-THF_DH_Cyclohyd"/>
    <property type="match status" value="1"/>
</dbReference>
<dbReference type="FunFam" id="3.40.50.720:FF:000006">
    <property type="entry name" value="Bifunctional protein FolD"/>
    <property type="match status" value="1"/>
</dbReference>
<dbReference type="FunFam" id="3.40.50.10860:FF:000005">
    <property type="entry name" value="C-1-tetrahydrofolate synthase, cytoplasmic, putative"/>
    <property type="match status" value="1"/>
</dbReference>
<dbReference type="Gene3D" id="3.40.50.10860">
    <property type="entry name" value="Leucine Dehydrogenase, chain A, domain 1"/>
    <property type="match status" value="1"/>
</dbReference>
<dbReference type="Gene3D" id="3.40.50.720">
    <property type="entry name" value="NAD(P)-binding Rossmann-like Domain"/>
    <property type="match status" value="1"/>
</dbReference>
<dbReference type="HAMAP" id="MF_01576">
    <property type="entry name" value="THF_DHG_CYH"/>
    <property type="match status" value="1"/>
</dbReference>
<dbReference type="InterPro" id="IPR046346">
    <property type="entry name" value="Aminoacid_DH-like_N_sf"/>
</dbReference>
<dbReference type="InterPro" id="IPR036291">
    <property type="entry name" value="NAD(P)-bd_dom_sf"/>
</dbReference>
<dbReference type="InterPro" id="IPR000672">
    <property type="entry name" value="THF_DH/CycHdrlase"/>
</dbReference>
<dbReference type="InterPro" id="IPR020630">
    <property type="entry name" value="THF_DH/CycHdrlase_cat_dom"/>
</dbReference>
<dbReference type="InterPro" id="IPR020867">
    <property type="entry name" value="THF_DH/CycHdrlase_CS"/>
</dbReference>
<dbReference type="InterPro" id="IPR020631">
    <property type="entry name" value="THF_DH/CycHdrlase_NAD-bd_dom"/>
</dbReference>
<dbReference type="NCBIfam" id="NF010783">
    <property type="entry name" value="PRK14186.1"/>
    <property type="match status" value="1"/>
</dbReference>
<dbReference type="NCBIfam" id="NF010785">
    <property type="entry name" value="PRK14188.1"/>
    <property type="match status" value="1"/>
</dbReference>
<dbReference type="PANTHER" id="PTHR48099:SF5">
    <property type="entry name" value="C-1-TETRAHYDROFOLATE SYNTHASE, CYTOPLASMIC"/>
    <property type="match status" value="1"/>
</dbReference>
<dbReference type="PANTHER" id="PTHR48099">
    <property type="entry name" value="C-1-TETRAHYDROFOLATE SYNTHASE, CYTOPLASMIC-RELATED"/>
    <property type="match status" value="1"/>
</dbReference>
<dbReference type="Pfam" id="PF00763">
    <property type="entry name" value="THF_DHG_CYH"/>
    <property type="match status" value="1"/>
</dbReference>
<dbReference type="Pfam" id="PF02882">
    <property type="entry name" value="THF_DHG_CYH_C"/>
    <property type="match status" value="1"/>
</dbReference>
<dbReference type="PRINTS" id="PR00085">
    <property type="entry name" value="THFDHDRGNASE"/>
</dbReference>
<dbReference type="SUPFAM" id="SSF53223">
    <property type="entry name" value="Aminoacid dehydrogenase-like, N-terminal domain"/>
    <property type="match status" value="1"/>
</dbReference>
<dbReference type="SUPFAM" id="SSF51735">
    <property type="entry name" value="NAD(P)-binding Rossmann-fold domains"/>
    <property type="match status" value="1"/>
</dbReference>
<dbReference type="PROSITE" id="PS00767">
    <property type="entry name" value="THF_DHG_CYH_2"/>
    <property type="match status" value="1"/>
</dbReference>
<organism>
    <name type="scientific">Rhizobium meliloti (strain 1021)</name>
    <name type="common">Ensifer meliloti</name>
    <name type="synonym">Sinorhizobium meliloti</name>
    <dbReference type="NCBI Taxonomy" id="266834"/>
    <lineage>
        <taxon>Bacteria</taxon>
        <taxon>Pseudomonadati</taxon>
        <taxon>Pseudomonadota</taxon>
        <taxon>Alphaproteobacteria</taxon>
        <taxon>Hyphomicrobiales</taxon>
        <taxon>Rhizobiaceae</taxon>
        <taxon>Sinorhizobium/Ensifer group</taxon>
        <taxon>Sinorhizobium</taxon>
    </lineage>
</organism>
<reference key="1">
    <citation type="journal article" date="2001" name="Proc. Natl. Acad. Sci. U.S.A.">
        <title>Analysis of the chromosome sequence of the legume symbiont Sinorhizobium meliloti strain 1021.</title>
        <authorList>
            <person name="Capela D."/>
            <person name="Barloy-Hubler F."/>
            <person name="Gouzy J."/>
            <person name="Bothe G."/>
            <person name="Ampe F."/>
            <person name="Batut J."/>
            <person name="Boistard P."/>
            <person name="Becker A."/>
            <person name="Boutry M."/>
            <person name="Cadieu E."/>
            <person name="Dreano S."/>
            <person name="Gloux S."/>
            <person name="Godrie T."/>
            <person name="Goffeau A."/>
            <person name="Kahn D."/>
            <person name="Kiss E."/>
            <person name="Lelaure V."/>
            <person name="Masuy D."/>
            <person name="Pohl T."/>
            <person name="Portetelle D."/>
            <person name="Puehler A."/>
            <person name="Purnelle B."/>
            <person name="Ramsperger U."/>
            <person name="Renard C."/>
            <person name="Thebault P."/>
            <person name="Vandenbol M."/>
            <person name="Weidner S."/>
            <person name="Galibert F."/>
        </authorList>
    </citation>
    <scope>NUCLEOTIDE SEQUENCE [LARGE SCALE GENOMIC DNA]</scope>
    <source>
        <strain>1021</strain>
    </source>
</reference>
<reference key="2">
    <citation type="journal article" date="2001" name="Science">
        <title>The composite genome of the legume symbiont Sinorhizobium meliloti.</title>
        <authorList>
            <person name="Galibert F."/>
            <person name="Finan T.M."/>
            <person name="Long S.R."/>
            <person name="Puehler A."/>
            <person name="Abola P."/>
            <person name="Ampe F."/>
            <person name="Barloy-Hubler F."/>
            <person name="Barnett M.J."/>
            <person name="Becker A."/>
            <person name="Boistard P."/>
            <person name="Bothe G."/>
            <person name="Boutry M."/>
            <person name="Bowser L."/>
            <person name="Buhrmester J."/>
            <person name="Cadieu E."/>
            <person name="Capela D."/>
            <person name="Chain P."/>
            <person name="Cowie A."/>
            <person name="Davis R.W."/>
            <person name="Dreano S."/>
            <person name="Federspiel N.A."/>
            <person name="Fisher R.F."/>
            <person name="Gloux S."/>
            <person name="Godrie T."/>
            <person name="Goffeau A."/>
            <person name="Golding B."/>
            <person name="Gouzy J."/>
            <person name="Gurjal M."/>
            <person name="Hernandez-Lucas I."/>
            <person name="Hong A."/>
            <person name="Huizar L."/>
            <person name="Hyman R.W."/>
            <person name="Jones T."/>
            <person name="Kahn D."/>
            <person name="Kahn M.L."/>
            <person name="Kalman S."/>
            <person name="Keating D.H."/>
            <person name="Kiss E."/>
            <person name="Komp C."/>
            <person name="Lelaure V."/>
            <person name="Masuy D."/>
            <person name="Palm C."/>
            <person name="Peck M.C."/>
            <person name="Pohl T.M."/>
            <person name="Portetelle D."/>
            <person name="Purnelle B."/>
            <person name="Ramsperger U."/>
            <person name="Surzycki R."/>
            <person name="Thebault P."/>
            <person name="Vandenbol M."/>
            <person name="Vorhoelter F.J."/>
            <person name="Weidner S."/>
            <person name="Wells D.H."/>
            <person name="Wong K."/>
            <person name="Yeh K.-C."/>
            <person name="Batut J."/>
        </authorList>
    </citation>
    <scope>NUCLEOTIDE SEQUENCE [LARGE SCALE GENOMIC DNA]</scope>
    <source>
        <strain>1021</strain>
    </source>
</reference>
<keyword id="KW-0028">Amino-acid biosynthesis</keyword>
<keyword id="KW-0368">Histidine biosynthesis</keyword>
<keyword id="KW-0378">Hydrolase</keyword>
<keyword id="KW-0486">Methionine biosynthesis</keyword>
<keyword id="KW-0511">Multifunctional enzyme</keyword>
<keyword id="KW-0521">NADP</keyword>
<keyword id="KW-0554">One-carbon metabolism</keyword>
<keyword id="KW-0560">Oxidoreductase</keyword>
<keyword id="KW-0658">Purine biosynthesis</keyword>
<keyword id="KW-1185">Reference proteome</keyword>
<evidence type="ECO:0000255" key="1">
    <source>
        <dbReference type="HAMAP-Rule" id="MF_01576"/>
    </source>
</evidence>
<accession>Q92T88</accession>
<comment type="function">
    <text evidence="1">Catalyzes the oxidation of 5,10-methylenetetrahydrofolate to 5,10-methenyltetrahydrofolate and then the hydrolysis of 5,10-methenyltetrahydrofolate to 10-formyltetrahydrofolate.</text>
</comment>
<comment type="catalytic activity">
    <reaction evidence="1">
        <text>(6R)-5,10-methylene-5,6,7,8-tetrahydrofolate + NADP(+) = (6R)-5,10-methenyltetrahydrofolate + NADPH</text>
        <dbReference type="Rhea" id="RHEA:22812"/>
        <dbReference type="ChEBI" id="CHEBI:15636"/>
        <dbReference type="ChEBI" id="CHEBI:57455"/>
        <dbReference type="ChEBI" id="CHEBI:57783"/>
        <dbReference type="ChEBI" id="CHEBI:58349"/>
        <dbReference type="EC" id="1.5.1.5"/>
    </reaction>
</comment>
<comment type="catalytic activity">
    <reaction evidence="1">
        <text>(6R)-5,10-methenyltetrahydrofolate + H2O = (6R)-10-formyltetrahydrofolate + H(+)</text>
        <dbReference type="Rhea" id="RHEA:23700"/>
        <dbReference type="ChEBI" id="CHEBI:15377"/>
        <dbReference type="ChEBI" id="CHEBI:15378"/>
        <dbReference type="ChEBI" id="CHEBI:57455"/>
        <dbReference type="ChEBI" id="CHEBI:195366"/>
        <dbReference type="EC" id="3.5.4.9"/>
    </reaction>
</comment>
<comment type="pathway">
    <text evidence="1">One-carbon metabolism; tetrahydrofolate interconversion.</text>
</comment>
<comment type="subunit">
    <text evidence="1">Homodimer.</text>
</comment>
<comment type="similarity">
    <text evidence="1">Belongs to the tetrahydrofolate dehydrogenase/cyclohydrolase family.</text>
</comment>
<gene>
    <name evidence="1" type="primary">folD1</name>
    <name type="ordered locus">R00081</name>
    <name type="ORF">SMc02604</name>
</gene>
<protein>
    <recommendedName>
        <fullName evidence="1">Bifunctional protein FolD 1</fullName>
    </recommendedName>
    <domain>
        <recommendedName>
            <fullName evidence="1">Methylenetetrahydrofolate dehydrogenase</fullName>
            <ecNumber evidence="1">1.5.1.5</ecNumber>
        </recommendedName>
    </domain>
    <domain>
        <recommendedName>
            <fullName evidence="1">Methenyltetrahydrofolate cyclohydrolase</fullName>
            <ecNumber evidence="1">3.5.4.9</ecNumber>
        </recommendedName>
    </domain>
</protein>
<feature type="chain" id="PRO_0000268465" description="Bifunctional protein FolD 1">
    <location>
        <begin position="1"/>
        <end position="306"/>
    </location>
</feature>
<feature type="binding site" evidence="1">
    <location>
        <begin position="168"/>
        <end position="170"/>
    </location>
    <ligand>
        <name>NADP(+)</name>
        <dbReference type="ChEBI" id="CHEBI:58349"/>
    </ligand>
</feature>
<feature type="binding site" evidence="1">
    <location>
        <position position="193"/>
    </location>
    <ligand>
        <name>NADP(+)</name>
        <dbReference type="ChEBI" id="CHEBI:58349"/>
    </ligand>
</feature>
<feature type="binding site" evidence="1">
    <location>
        <position position="234"/>
    </location>
    <ligand>
        <name>NADP(+)</name>
        <dbReference type="ChEBI" id="CHEBI:58349"/>
    </ligand>
</feature>
<name>FOLD1_RHIME</name>
<proteinExistence type="inferred from homology"/>
<sequence>MTTIIDGKAVAASINGAIKDANAELQEQTGRKTGLSVIIVGDDPASHAYVGAKSRMAKECGFFSVQHTLPKETTQQELAGLVHQLNADDGIHGILVQLPLPEHLDADAIIQSIRPEKDVDGLHVANAGKLATGDLESGLISCTPAGAMVFVRRVHGRDLSGLNALVIGRSNLFGKPMAQLLLNANATVTIAHSRTSDLASICRNADIVIAAVGRPEMVKANWLKTGATVIDVGINRVPAPEKGENRTRLVGDVAFAECAPFASAITPVPGGVGPMTIAMLMANSVIAAHRASGLKVSERLSKLISG</sequence>